<name>RS21_ACIF5</name>
<accession>B5ELK7</accession>
<reference key="1">
    <citation type="submission" date="2008-08" db="EMBL/GenBank/DDBJ databases">
        <title>Complete sequence of Acidithiobacillus ferrooxidans ATCC 53993.</title>
        <authorList>
            <person name="Lucas S."/>
            <person name="Copeland A."/>
            <person name="Lapidus A."/>
            <person name="Glavina del Rio T."/>
            <person name="Dalin E."/>
            <person name="Tice H."/>
            <person name="Bruce D."/>
            <person name="Goodwin L."/>
            <person name="Pitluck S."/>
            <person name="Sims D."/>
            <person name="Brettin T."/>
            <person name="Detter J.C."/>
            <person name="Han C."/>
            <person name="Kuske C.R."/>
            <person name="Larimer F."/>
            <person name="Land M."/>
            <person name="Hauser L."/>
            <person name="Kyrpides N."/>
            <person name="Lykidis A."/>
            <person name="Borole A.P."/>
        </authorList>
    </citation>
    <scope>NUCLEOTIDE SEQUENCE [LARGE SCALE GENOMIC DNA]</scope>
    <source>
        <strain>ATCC 53993 / BNL-5-31</strain>
    </source>
</reference>
<keyword id="KW-0687">Ribonucleoprotein</keyword>
<keyword id="KW-0689">Ribosomal protein</keyword>
<dbReference type="EMBL" id="CP001132">
    <property type="protein sequence ID" value="ACH84191.1"/>
    <property type="molecule type" value="Genomic_DNA"/>
</dbReference>
<dbReference type="RefSeq" id="WP_009564692.1">
    <property type="nucleotide sequence ID" value="NC_011206.1"/>
</dbReference>
<dbReference type="SMR" id="B5ELK7"/>
<dbReference type="GeneID" id="65281433"/>
<dbReference type="KEGG" id="afe:Lferr_1974"/>
<dbReference type="eggNOG" id="COG0828">
    <property type="taxonomic scope" value="Bacteria"/>
</dbReference>
<dbReference type="HOGENOM" id="CLU_159258_1_2_6"/>
<dbReference type="GO" id="GO:1990904">
    <property type="term" value="C:ribonucleoprotein complex"/>
    <property type="evidence" value="ECO:0007669"/>
    <property type="project" value="UniProtKB-KW"/>
</dbReference>
<dbReference type="GO" id="GO:0005840">
    <property type="term" value="C:ribosome"/>
    <property type="evidence" value="ECO:0007669"/>
    <property type="project" value="UniProtKB-KW"/>
</dbReference>
<dbReference type="GO" id="GO:0003735">
    <property type="term" value="F:structural constituent of ribosome"/>
    <property type="evidence" value="ECO:0007669"/>
    <property type="project" value="InterPro"/>
</dbReference>
<dbReference type="GO" id="GO:0006412">
    <property type="term" value="P:translation"/>
    <property type="evidence" value="ECO:0007669"/>
    <property type="project" value="UniProtKB-UniRule"/>
</dbReference>
<dbReference type="Gene3D" id="1.20.5.1150">
    <property type="entry name" value="Ribosomal protein S8"/>
    <property type="match status" value="1"/>
</dbReference>
<dbReference type="HAMAP" id="MF_00358">
    <property type="entry name" value="Ribosomal_bS21"/>
    <property type="match status" value="1"/>
</dbReference>
<dbReference type="InterPro" id="IPR001911">
    <property type="entry name" value="Ribosomal_bS21"/>
</dbReference>
<dbReference type="InterPro" id="IPR018278">
    <property type="entry name" value="Ribosomal_bS21_CS"/>
</dbReference>
<dbReference type="InterPro" id="IPR038380">
    <property type="entry name" value="Ribosomal_bS21_sf"/>
</dbReference>
<dbReference type="NCBIfam" id="TIGR00030">
    <property type="entry name" value="S21p"/>
    <property type="match status" value="1"/>
</dbReference>
<dbReference type="PANTHER" id="PTHR21109">
    <property type="entry name" value="MITOCHONDRIAL 28S RIBOSOMAL PROTEIN S21"/>
    <property type="match status" value="1"/>
</dbReference>
<dbReference type="PANTHER" id="PTHR21109:SF22">
    <property type="entry name" value="SMALL RIBOSOMAL SUBUNIT PROTEIN BS21"/>
    <property type="match status" value="1"/>
</dbReference>
<dbReference type="Pfam" id="PF01165">
    <property type="entry name" value="Ribosomal_S21"/>
    <property type="match status" value="1"/>
</dbReference>
<dbReference type="PRINTS" id="PR00976">
    <property type="entry name" value="RIBOSOMALS21"/>
</dbReference>
<dbReference type="PROSITE" id="PS01181">
    <property type="entry name" value="RIBOSOMAL_S21"/>
    <property type="match status" value="1"/>
</dbReference>
<feature type="chain" id="PRO_1000120576" description="Small ribosomal subunit protein bS21">
    <location>
        <begin position="1"/>
        <end position="71"/>
    </location>
</feature>
<organism>
    <name type="scientific">Acidithiobacillus ferrooxidans (strain ATCC 53993 / BNL-5-31)</name>
    <name type="common">Leptospirillum ferrooxidans (ATCC 53993)</name>
    <dbReference type="NCBI Taxonomy" id="380394"/>
    <lineage>
        <taxon>Bacteria</taxon>
        <taxon>Pseudomonadati</taxon>
        <taxon>Pseudomonadota</taxon>
        <taxon>Acidithiobacillia</taxon>
        <taxon>Acidithiobacillales</taxon>
        <taxon>Acidithiobacillaceae</taxon>
        <taxon>Acidithiobacillus</taxon>
    </lineage>
</organism>
<proteinExistence type="inferred from homology"/>
<evidence type="ECO:0000255" key="1">
    <source>
        <dbReference type="HAMAP-Rule" id="MF_00358"/>
    </source>
</evidence>
<evidence type="ECO:0000305" key="2"/>
<comment type="similarity">
    <text evidence="1">Belongs to the bacterial ribosomal protein bS21 family.</text>
</comment>
<protein>
    <recommendedName>
        <fullName evidence="1">Small ribosomal subunit protein bS21</fullName>
    </recommendedName>
    <alternativeName>
        <fullName evidence="2">30S ribosomal protein S21</fullName>
    </alternativeName>
</protein>
<gene>
    <name evidence="1" type="primary">rpsU</name>
    <name type="ordered locus">Lferr_1974</name>
</gene>
<sequence length="71" mass="8695">MPTVRVKENEPFEVALRRFKRSCEKAGVLTEVRRREFYEKPTEERKRKAAAARKRALKRMRRQSMRLVRLY</sequence>